<comment type="function">
    <text evidence="1">Binds 23S rRNA and is also seen to make contacts with the A and possibly P site tRNAs.</text>
</comment>
<comment type="subunit">
    <text evidence="1">Part of the 50S ribosomal subunit.</text>
</comment>
<comment type="similarity">
    <text evidence="1">Belongs to the universal ribosomal protein uL16 family.</text>
</comment>
<feature type="chain" id="PRO_0000062162" description="Large ribosomal subunit protein uL16">
    <location>
        <begin position="1"/>
        <end position="136"/>
    </location>
</feature>
<organism>
    <name type="scientific">Pelagibacter ubique (strain HTCC1062)</name>
    <dbReference type="NCBI Taxonomy" id="335992"/>
    <lineage>
        <taxon>Bacteria</taxon>
        <taxon>Pseudomonadati</taxon>
        <taxon>Pseudomonadota</taxon>
        <taxon>Alphaproteobacteria</taxon>
        <taxon>Candidatus Pelagibacterales</taxon>
        <taxon>Candidatus Pelagibacteraceae</taxon>
        <taxon>Candidatus Pelagibacter</taxon>
    </lineage>
</organism>
<protein>
    <recommendedName>
        <fullName evidence="1">Large ribosomal subunit protein uL16</fullName>
    </recommendedName>
    <alternativeName>
        <fullName evidence="2">50S ribosomal protein L16</fullName>
    </alternativeName>
</protein>
<name>RL16_PELUB</name>
<sequence length="136" mass="15401">MLQPVRTKYRKAHKGRIHGTATRASKINYGSFALKAMAPERIIGKQIEAARVALTRHMKRQGRVWTRIFPNIPVSKKPVEVRMGKGKGAPEYWACRVKPGRILFEIDGVSETIAKEALYKASAKLPIKTKFIKRFA</sequence>
<gene>
    <name evidence="1" type="primary">rplP</name>
    <name type="ordered locus">SAR11_1110</name>
</gene>
<dbReference type="EMBL" id="CP000084">
    <property type="protein sequence ID" value="AAZ21913.1"/>
    <property type="molecule type" value="Genomic_DNA"/>
</dbReference>
<dbReference type="RefSeq" id="WP_006996818.1">
    <property type="nucleotide sequence ID" value="NC_007205.1"/>
</dbReference>
<dbReference type="SMR" id="Q4FLM5"/>
<dbReference type="STRING" id="335992.SAR11_1110"/>
<dbReference type="GeneID" id="66295599"/>
<dbReference type="KEGG" id="pub:SAR11_1110"/>
<dbReference type="eggNOG" id="COG0197">
    <property type="taxonomic scope" value="Bacteria"/>
</dbReference>
<dbReference type="HOGENOM" id="CLU_078858_2_1_5"/>
<dbReference type="OrthoDB" id="9802589at2"/>
<dbReference type="Proteomes" id="UP000002528">
    <property type="component" value="Chromosome"/>
</dbReference>
<dbReference type="GO" id="GO:0022625">
    <property type="term" value="C:cytosolic large ribosomal subunit"/>
    <property type="evidence" value="ECO:0007669"/>
    <property type="project" value="TreeGrafter"/>
</dbReference>
<dbReference type="GO" id="GO:0019843">
    <property type="term" value="F:rRNA binding"/>
    <property type="evidence" value="ECO:0007669"/>
    <property type="project" value="UniProtKB-UniRule"/>
</dbReference>
<dbReference type="GO" id="GO:0003735">
    <property type="term" value="F:structural constituent of ribosome"/>
    <property type="evidence" value="ECO:0007669"/>
    <property type="project" value="InterPro"/>
</dbReference>
<dbReference type="GO" id="GO:0000049">
    <property type="term" value="F:tRNA binding"/>
    <property type="evidence" value="ECO:0007669"/>
    <property type="project" value="UniProtKB-KW"/>
</dbReference>
<dbReference type="GO" id="GO:0006412">
    <property type="term" value="P:translation"/>
    <property type="evidence" value="ECO:0007669"/>
    <property type="project" value="UniProtKB-UniRule"/>
</dbReference>
<dbReference type="CDD" id="cd01433">
    <property type="entry name" value="Ribosomal_L16_L10e"/>
    <property type="match status" value="1"/>
</dbReference>
<dbReference type="FunFam" id="3.90.1170.10:FF:000001">
    <property type="entry name" value="50S ribosomal protein L16"/>
    <property type="match status" value="1"/>
</dbReference>
<dbReference type="Gene3D" id="3.90.1170.10">
    <property type="entry name" value="Ribosomal protein L10e/L16"/>
    <property type="match status" value="1"/>
</dbReference>
<dbReference type="HAMAP" id="MF_01342">
    <property type="entry name" value="Ribosomal_uL16"/>
    <property type="match status" value="1"/>
</dbReference>
<dbReference type="InterPro" id="IPR047873">
    <property type="entry name" value="Ribosomal_uL16"/>
</dbReference>
<dbReference type="InterPro" id="IPR000114">
    <property type="entry name" value="Ribosomal_uL16_bact-type"/>
</dbReference>
<dbReference type="InterPro" id="IPR020798">
    <property type="entry name" value="Ribosomal_uL16_CS"/>
</dbReference>
<dbReference type="InterPro" id="IPR016180">
    <property type="entry name" value="Ribosomal_uL16_dom"/>
</dbReference>
<dbReference type="InterPro" id="IPR036920">
    <property type="entry name" value="Ribosomal_uL16_sf"/>
</dbReference>
<dbReference type="NCBIfam" id="TIGR01164">
    <property type="entry name" value="rplP_bact"/>
    <property type="match status" value="1"/>
</dbReference>
<dbReference type="PANTHER" id="PTHR12220">
    <property type="entry name" value="50S/60S RIBOSOMAL PROTEIN L16"/>
    <property type="match status" value="1"/>
</dbReference>
<dbReference type="PANTHER" id="PTHR12220:SF13">
    <property type="entry name" value="LARGE RIBOSOMAL SUBUNIT PROTEIN UL16M"/>
    <property type="match status" value="1"/>
</dbReference>
<dbReference type="Pfam" id="PF00252">
    <property type="entry name" value="Ribosomal_L16"/>
    <property type="match status" value="1"/>
</dbReference>
<dbReference type="PRINTS" id="PR00060">
    <property type="entry name" value="RIBOSOMALL16"/>
</dbReference>
<dbReference type="SUPFAM" id="SSF54686">
    <property type="entry name" value="Ribosomal protein L16p/L10e"/>
    <property type="match status" value="1"/>
</dbReference>
<dbReference type="PROSITE" id="PS00701">
    <property type="entry name" value="RIBOSOMAL_L16_2"/>
    <property type="match status" value="1"/>
</dbReference>
<keyword id="KW-1185">Reference proteome</keyword>
<keyword id="KW-0687">Ribonucleoprotein</keyword>
<keyword id="KW-0689">Ribosomal protein</keyword>
<keyword id="KW-0694">RNA-binding</keyword>
<keyword id="KW-0699">rRNA-binding</keyword>
<keyword id="KW-0820">tRNA-binding</keyword>
<reference key="1">
    <citation type="journal article" date="2005" name="Science">
        <title>Genome streamlining in a cosmopolitan oceanic bacterium.</title>
        <authorList>
            <person name="Giovannoni S.J."/>
            <person name="Tripp H.J."/>
            <person name="Givan S."/>
            <person name="Podar M."/>
            <person name="Vergin K.L."/>
            <person name="Baptista D."/>
            <person name="Bibbs L."/>
            <person name="Eads J."/>
            <person name="Richardson T.H."/>
            <person name="Noordewier M."/>
            <person name="Rappe M.S."/>
            <person name="Short J.M."/>
            <person name="Carrington J.C."/>
            <person name="Mathur E.J."/>
        </authorList>
    </citation>
    <scope>NUCLEOTIDE SEQUENCE [LARGE SCALE GENOMIC DNA]</scope>
    <source>
        <strain>HTCC1062</strain>
    </source>
</reference>
<accession>Q4FLM5</accession>
<evidence type="ECO:0000255" key="1">
    <source>
        <dbReference type="HAMAP-Rule" id="MF_01342"/>
    </source>
</evidence>
<evidence type="ECO:0000305" key="2"/>
<proteinExistence type="inferred from homology"/>